<feature type="chain" id="PRO_0000364397" description="S-adenosylmethionine decarboxylase beta chain" evidence="1">
    <location>
        <begin position="1"/>
        <end position="111"/>
    </location>
</feature>
<feature type="chain" id="PRO_0000364398" description="S-adenosylmethionine decarboxylase alpha chain" evidence="1">
    <location>
        <begin position="112"/>
        <end position="264"/>
    </location>
</feature>
<feature type="active site" description="Schiff-base intermediate with substrate; via pyruvic acid" evidence="1">
    <location>
        <position position="112"/>
    </location>
</feature>
<feature type="active site" description="Proton acceptor; for processing activity" evidence="1">
    <location>
        <position position="117"/>
    </location>
</feature>
<feature type="active site" description="Proton donor; for catalytic activity" evidence="1">
    <location>
        <position position="140"/>
    </location>
</feature>
<feature type="site" description="Cleavage (non-hydrolytic); by autolysis" evidence="1">
    <location>
        <begin position="111"/>
        <end position="112"/>
    </location>
</feature>
<feature type="modified residue" description="Pyruvic acid (Ser); by autocatalysis" evidence="1">
    <location>
        <position position="112"/>
    </location>
</feature>
<gene>
    <name evidence="1" type="primary">speD</name>
    <name type="ordered locus">SeAg_B0197</name>
</gene>
<comment type="function">
    <text evidence="1">Catalyzes the decarboxylation of S-adenosylmethionine to S-adenosylmethioninamine (dcAdoMet), the propylamine donor required for the synthesis of the polyamines spermine and spermidine from the diamine putrescine.</text>
</comment>
<comment type="catalytic activity">
    <reaction evidence="1">
        <text>S-adenosyl-L-methionine + H(+) = S-adenosyl 3-(methylsulfanyl)propylamine + CO2</text>
        <dbReference type="Rhea" id="RHEA:15981"/>
        <dbReference type="ChEBI" id="CHEBI:15378"/>
        <dbReference type="ChEBI" id="CHEBI:16526"/>
        <dbReference type="ChEBI" id="CHEBI:57443"/>
        <dbReference type="ChEBI" id="CHEBI:59789"/>
        <dbReference type="EC" id="4.1.1.50"/>
    </reaction>
</comment>
<comment type="cofactor">
    <cofactor evidence="1">
        <name>pyruvate</name>
        <dbReference type="ChEBI" id="CHEBI:15361"/>
    </cofactor>
    <text evidence="1">Binds 1 pyruvoyl group covalently per subunit.</text>
</comment>
<comment type="pathway">
    <text evidence="1">Amine and polyamine biosynthesis; S-adenosylmethioninamine biosynthesis; S-adenosylmethioninamine from S-adenosyl-L-methionine: step 1/1.</text>
</comment>
<comment type="subunit">
    <text evidence="1">Heterooctamer of four alpha and four beta chains arranged as a tetramer of alpha/beta heterodimers.</text>
</comment>
<comment type="PTM">
    <text evidence="1">Is synthesized initially as an inactive proenzyme. Formation of the active enzyme involves a self-maturation process in which the active site pyruvoyl group is generated from an internal serine residue via an autocatalytic post-translational modification. Two non-identical subunits are generated from the proenzyme in this reaction, and the pyruvate is formed at the N-terminus of the alpha chain, which is derived from the carboxyl end of the proenzyme. The post-translation cleavage follows an unusual pathway, termed non-hydrolytic serinolysis, in which the side chain hydroxyl group of the serine supplies its oxygen atom to form the C-terminus of the beta chain, while the remainder of the serine residue undergoes an oxidative deamination to produce ammonia and the pyruvoyl group blocking the N-terminus of the alpha chain.</text>
</comment>
<comment type="similarity">
    <text evidence="1">Belongs to the prokaryotic AdoMetDC family. Type 2 subfamily.</text>
</comment>
<protein>
    <recommendedName>
        <fullName evidence="1">S-adenosylmethionine decarboxylase proenzyme</fullName>
        <shortName evidence="1">AdoMetDC</shortName>
        <shortName evidence="1">SAMDC</shortName>
        <ecNumber evidence="1">4.1.1.50</ecNumber>
    </recommendedName>
    <component>
        <recommendedName>
            <fullName evidence="1">S-adenosylmethionine decarboxylase beta chain</fullName>
        </recommendedName>
    </component>
    <component>
        <recommendedName>
            <fullName evidence="1">S-adenosylmethionine decarboxylase alpha chain</fullName>
        </recommendedName>
    </component>
</protein>
<organism>
    <name type="scientific">Salmonella agona (strain SL483)</name>
    <dbReference type="NCBI Taxonomy" id="454166"/>
    <lineage>
        <taxon>Bacteria</taxon>
        <taxon>Pseudomonadati</taxon>
        <taxon>Pseudomonadota</taxon>
        <taxon>Gammaproteobacteria</taxon>
        <taxon>Enterobacterales</taxon>
        <taxon>Enterobacteriaceae</taxon>
        <taxon>Salmonella</taxon>
    </lineage>
</organism>
<dbReference type="EC" id="4.1.1.50" evidence="1"/>
<dbReference type="EMBL" id="CP001138">
    <property type="protein sequence ID" value="ACH52132.1"/>
    <property type="molecule type" value="Genomic_DNA"/>
</dbReference>
<dbReference type="RefSeq" id="WP_000734276.1">
    <property type="nucleotide sequence ID" value="NC_011149.1"/>
</dbReference>
<dbReference type="KEGG" id="sea:SeAg_B0197"/>
<dbReference type="HOGENOM" id="CLU_092007_0_0_6"/>
<dbReference type="UniPathway" id="UPA00331">
    <property type="reaction ID" value="UER00451"/>
</dbReference>
<dbReference type="Proteomes" id="UP000008819">
    <property type="component" value="Chromosome"/>
</dbReference>
<dbReference type="GO" id="GO:0005829">
    <property type="term" value="C:cytosol"/>
    <property type="evidence" value="ECO:0007669"/>
    <property type="project" value="TreeGrafter"/>
</dbReference>
<dbReference type="GO" id="GO:0004014">
    <property type="term" value="F:adenosylmethionine decarboxylase activity"/>
    <property type="evidence" value="ECO:0007669"/>
    <property type="project" value="UniProtKB-UniRule"/>
</dbReference>
<dbReference type="GO" id="GO:0008295">
    <property type="term" value="P:spermidine biosynthetic process"/>
    <property type="evidence" value="ECO:0007669"/>
    <property type="project" value="UniProtKB-UniRule"/>
</dbReference>
<dbReference type="FunFam" id="3.60.90.10:FF:000001">
    <property type="entry name" value="S-adenosylmethionine decarboxylase proenzyme"/>
    <property type="match status" value="1"/>
</dbReference>
<dbReference type="Gene3D" id="3.60.90.10">
    <property type="entry name" value="S-adenosylmethionine decarboxylase"/>
    <property type="match status" value="1"/>
</dbReference>
<dbReference type="HAMAP" id="MF_00465">
    <property type="entry name" value="AdoMetDC_2"/>
    <property type="match status" value="1"/>
</dbReference>
<dbReference type="InterPro" id="IPR003826">
    <property type="entry name" value="AdoMetDC_fam_prok"/>
</dbReference>
<dbReference type="InterPro" id="IPR009165">
    <property type="entry name" value="S-AdoMet_deCO2ase_bac"/>
</dbReference>
<dbReference type="InterPro" id="IPR016067">
    <property type="entry name" value="S-AdoMet_deCO2ase_core"/>
</dbReference>
<dbReference type="NCBIfam" id="TIGR03331">
    <property type="entry name" value="SAM_DCase_Eco"/>
    <property type="match status" value="1"/>
</dbReference>
<dbReference type="PANTHER" id="PTHR33866">
    <property type="entry name" value="S-ADENOSYLMETHIONINE DECARBOXYLASE PROENZYME"/>
    <property type="match status" value="1"/>
</dbReference>
<dbReference type="PANTHER" id="PTHR33866:SF1">
    <property type="entry name" value="S-ADENOSYLMETHIONINE DECARBOXYLASE PROENZYME"/>
    <property type="match status" value="1"/>
</dbReference>
<dbReference type="Pfam" id="PF02675">
    <property type="entry name" value="AdoMet_dc"/>
    <property type="match status" value="1"/>
</dbReference>
<dbReference type="PIRSF" id="PIRSF001356">
    <property type="entry name" value="SAM_decarboxylas"/>
    <property type="match status" value="1"/>
</dbReference>
<dbReference type="SUPFAM" id="SSF56276">
    <property type="entry name" value="S-adenosylmethionine decarboxylase"/>
    <property type="match status" value="1"/>
</dbReference>
<reference key="1">
    <citation type="journal article" date="2011" name="J. Bacteriol.">
        <title>Comparative genomics of 28 Salmonella enterica isolates: evidence for CRISPR-mediated adaptive sublineage evolution.</title>
        <authorList>
            <person name="Fricke W.F."/>
            <person name="Mammel M.K."/>
            <person name="McDermott P.F."/>
            <person name="Tartera C."/>
            <person name="White D.G."/>
            <person name="Leclerc J.E."/>
            <person name="Ravel J."/>
            <person name="Cebula T.A."/>
        </authorList>
    </citation>
    <scope>NUCLEOTIDE SEQUENCE [LARGE SCALE GENOMIC DNA]</scope>
    <source>
        <strain>SL483</strain>
    </source>
</reference>
<evidence type="ECO:0000255" key="1">
    <source>
        <dbReference type="HAMAP-Rule" id="MF_00465"/>
    </source>
</evidence>
<sequence length="264" mass="30415">MKKLKLHGFNNLTKSLSFCIYDICYAKTAEERDGYIAYIDELYNANRLTEILSETCSIIGANILNIARQDYEPQGASVTILVSEEPIDPKLIDQTEHPGPLPETVVAHLDKSHICVHTYPESHPEGGLCTFRADIEVSTCGVISPLKALNYLIHQLESDIVTIDYRVRGFTRDVNGMKHFIDHEINSIQNFMSEDMKSLYDMVDVNVYQENIFHTKMLLKEFDLKHYMFHTKPEDLTETERQEITAALWKEMREIYYGRNISAV</sequence>
<name>SPED_SALA4</name>
<keyword id="KW-0068">Autocatalytic cleavage</keyword>
<keyword id="KW-0210">Decarboxylase</keyword>
<keyword id="KW-0456">Lyase</keyword>
<keyword id="KW-0620">Polyamine biosynthesis</keyword>
<keyword id="KW-0670">Pyruvate</keyword>
<keyword id="KW-0949">S-adenosyl-L-methionine</keyword>
<keyword id="KW-0704">Schiff base</keyword>
<keyword id="KW-0745">Spermidine biosynthesis</keyword>
<keyword id="KW-0865">Zymogen</keyword>
<proteinExistence type="inferred from homology"/>
<accession>B5F814</accession>